<gene>
    <name type="primary">ndhG</name>
</gene>
<accession>Q0G9Q9</accession>
<organism>
    <name type="scientific">Daucus carota</name>
    <name type="common">Wild carrot</name>
    <dbReference type="NCBI Taxonomy" id="4039"/>
    <lineage>
        <taxon>Eukaryota</taxon>
        <taxon>Viridiplantae</taxon>
        <taxon>Streptophyta</taxon>
        <taxon>Embryophyta</taxon>
        <taxon>Tracheophyta</taxon>
        <taxon>Spermatophyta</taxon>
        <taxon>Magnoliopsida</taxon>
        <taxon>eudicotyledons</taxon>
        <taxon>Gunneridae</taxon>
        <taxon>Pentapetalae</taxon>
        <taxon>asterids</taxon>
        <taxon>campanulids</taxon>
        <taxon>Apiales</taxon>
        <taxon>Apiaceae</taxon>
        <taxon>Apioideae</taxon>
        <taxon>Scandiceae</taxon>
        <taxon>Daucinae</taxon>
        <taxon>Daucus</taxon>
        <taxon>Daucus sect. Daucus</taxon>
    </lineage>
</organism>
<feature type="chain" id="PRO_0000360248" description="NAD(P)H-quinone oxidoreductase subunit 6, chloroplastic">
    <location>
        <begin position="1"/>
        <end position="176"/>
    </location>
</feature>
<feature type="transmembrane region" description="Helical" evidence="2">
    <location>
        <begin position="10"/>
        <end position="30"/>
    </location>
</feature>
<feature type="transmembrane region" description="Helical" evidence="2">
    <location>
        <begin position="32"/>
        <end position="52"/>
    </location>
</feature>
<feature type="transmembrane region" description="Helical" evidence="2">
    <location>
        <begin position="61"/>
        <end position="81"/>
    </location>
</feature>
<feature type="transmembrane region" description="Helical" evidence="2">
    <location>
        <begin position="92"/>
        <end position="112"/>
    </location>
</feature>
<feature type="transmembrane region" description="Helical" evidence="2">
    <location>
        <begin position="152"/>
        <end position="172"/>
    </location>
</feature>
<sequence>MDLPGPIHDFLLVFLGSGLILGGLGVVLLPNPIYSAFSLGLVLVCTSLFYILSNSHFVAAAQLLIYVGAINVLIIFAVMFMNGSEYYKDFHLWTVGDGVTSMVCTSIFVSLITTIPDTSWYGIIWTTKSNQIVEQDLISNSQQIGIHLSTDFFLPFELISIILLVSLIGAITVARQ</sequence>
<comment type="function">
    <text evidence="1">NDH shuttles electrons from NAD(P)H:plastoquinone, via FMN and iron-sulfur (Fe-S) centers, to quinones in the photosynthetic chain and possibly in a chloroplast respiratory chain. The immediate electron acceptor for the enzyme in this species is believed to be plastoquinone. Couples the redox reaction to proton translocation, and thus conserves the redox energy in a proton gradient (By similarity).</text>
</comment>
<comment type="catalytic activity">
    <reaction>
        <text>a plastoquinone + NADH + (n+1) H(+)(in) = a plastoquinol + NAD(+) + n H(+)(out)</text>
        <dbReference type="Rhea" id="RHEA:42608"/>
        <dbReference type="Rhea" id="RHEA-COMP:9561"/>
        <dbReference type="Rhea" id="RHEA-COMP:9562"/>
        <dbReference type="ChEBI" id="CHEBI:15378"/>
        <dbReference type="ChEBI" id="CHEBI:17757"/>
        <dbReference type="ChEBI" id="CHEBI:57540"/>
        <dbReference type="ChEBI" id="CHEBI:57945"/>
        <dbReference type="ChEBI" id="CHEBI:62192"/>
    </reaction>
</comment>
<comment type="catalytic activity">
    <reaction>
        <text>a plastoquinone + NADPH + (n+1) H(+)(in) = a plastoquinol + NADP(+) + n H(+)(out)</text>
        <dbReference type="Rhea" id="RHEA:42612"/>
        <dbReference type="Rhea" id="RHEA-COMP:9561"/>
        <dbReference type="Rhea" id="RHEA-COMP:9562"/>
        <dbReference type="ChEBI" id="CHEBI:15378"/>
        <dbReference type="ChEBI" id="CHEBI:17757"/>
        <dbReference type="ChEBI" id="CHEBI:57783"/>
        <dbReference type="ChEBI" id="CHEBI:58349"/>
        <dbReference type="ChEBI" id="CHEBI:62192"/>
    </reaction>
</comment>
<comment type="subunit">
    <text evidence="1">NDH is composed of at least 16 different subunits, 5 of which are encoded in the nucleus.</text>
</comment>
<comment type="subcellular location">
    <subcellularLocation>
        <location evidence="1">Plastid</location>
        <location evidence="1">Chloroplast thylakoid membrane</location>
        <topology evidence="1">Multi-pass membrane protein</topology>
    </subcellularLocation>
</comment>
<comment type="similarity">
    <text evidence="3">Belongs to the complex I subunit 6 family.</text>
</comment>
<keyword id="KW-0150">Chloroplast</keyword>
<keyword id="KW-0472">Membrane</keyword>
<keyword id="KW-0520">NAD</keyword>
<keyword id="KW-0521">NADP</keyword>
<keyword id="KW-0934">Plastid</keyword>
<keyword id="KW-0618">Plastoquinone</keyword>
<keyword id="KW-0874">Quinone</keyword>
<keyword id="KW-0793">Thylakoid</keyword>
<keyword id="KW-1278">Translocase</keyword>
<keyword id="KW-0812">Transmembrane</keyword>
<keyword id="KW-1133">Transmembrane helix</keyword>
<keyword id="KW-0813">Transport</keyword>
<dbReference type="EC" id="7.1.1.-"/>
<dbReference type="EMBL" id="DQ898156">
    <property type="protein sequence ID" value="ABI32477.1"/>
    <property type="molecule type" value="Genomic_DNA"/>
</dbReference>
<dbReference type="RefSeq" id="YP_740170.1">
    <property type="nucleotide sequence ID" value="NC_008325.1"/>
</dbReference>
<dbReference type="SMR" id="Q0G9Q9"/>
<dbReference type="GeneID" id="4266813"/>
<dbReference type="OMA" id="TSWYGVI"/>
<dbReference type="GO" id="GO:0009535">
    <property type="term" value="C:chloroplast thylakoid membrane"/>
    <property type="evidence" value="ECO:0007669"/>
    <property type="project" value="UniProtKB-SubCell"/>
</dbReference>
<dbReference type="GO" id="GO:0008137">
    <property type="term" value="F:NADH dehydrogenase (ubiquinone) activity"/>
    <property type="evidence" value="ECO:0007669"/>
    <property type="project" value="InterPro"/>
</dbReference>
<dbReference type="GO" id="GO:0048038">
    <property type="term" value="F:quinone binding"/>
    <property type="evidence" value="ECO:0007669"/>
    <property type="project" value="UniProtKB-KW"/>
</dbReference>
<dbReference type="FunFam" id="1.20.120.1200:FF:000002">
    <property type="entry name" value="NAD(P)H-quinone oxidoreductase subunit 6, chloroplastic"/>
    <property type="match status" value="1"/>
</dbReference>
<dbReference type="Gene3D" id="1.20.120.1200">
    <property type="entry name" value="NADH-ubiquinone/plastoquinone oxidoreductase chain 6, subunit NuoJ"/>
    <property type="match status" value="1"/>
</dbReference>
<dbReference type="InterPro" id="IPR050290">
    <property type="entry name" value="NAD(P)H-Q_Oxidoreduct_6"/>
</dbReference>
<dbReference type="InterPro" id="IPR001457">
    <property type="entry name" value="NADH_UbQ/plastoQ_OxRdtase_su6"/>
</dbReference>
<dbReference type="InterPro" id="IPR042106">
    <property type="entry name" value="Nuo/plastoQ_OxRdtase_6_NuoJ"/>
</dbReference>
<dbReference type="PANTHER" id="PTHR48479">
    <property type="entry name" value="NAD(P)H-QUINONE OXIDOREDUCTASE SUBUNIT 6, CHLOROPLASTIC"/>
    <property type="match status" value="1"/>
</dbReference>
<dbReference type="PANTHER" id="PTHR48479:SF1">
    <property type="entry name" value="NAD(P)H-QUINONE OXIDOREDUCTASE SUBUNIT 6, CHLOROPLASTIC"/>
    <property type="match status" value="1"/>
</dbReference>
<dbReference type="Pfam" id="PF00499">
    <property type="entry name" value="Oxidored_q3"/>
    <property type="match status" value="1"/>
</dbReference>
<geneLocation type="chloroplast"/>
<evidence type="ECO:0000250" key="1"/>
<evidence type="ECO:0000255" key="2"/>
<evidence type="ECO:0000305" key="3"/>
<reference key="1">
    <citation type="journal article" date="2006" name="BMC Genomics">
        <title>Complete plastid genome sequence of Daucus carota: implications for biotechnology and phylogeny of angiosperms.</title>
        <authorList>
            <person name="Ruhlman T."/>
            <person name="Lee S.-B."/>
            <person name="Jansen R.K."/>
            <person name="Hostetler J.B."/>
            <person name="Tallon L.J."/>
            <person name="Town C.D."/>
            <person name="Daniell H."/>
        </authorList>
    </citation>
    <scope>NUCLEOTIDE SEQUENCE [LARGE SCALE GENOMIC DNA]</scope>
    <source>
        <strain>cv. Danvers Half-long</strain>
    </source>
</reference>
<name>NU6C_DAUCA</name>
<proteinExistence type="inferred from homology"/>
<protein>
    <recommendedName>
        <fullName>NAD(P)H-quinone oxidoreductase subunit 6, chloroplastic</fullName>
        <ecNumber>7.1.1.-</ecNumber>
    </recommendedName>
    <alternativeName>
        <fullName>NAD(P)H dehydrogenase subunit 6</fullName>
    </alternativeName>
    <alternativeName>
        <fullName>NADH-plastoquinone oxidoreductase subunit 6</fullName>
    </alternativeName>
</protein>